<name>YCX6_MESVI</name>
<geneLocation type="chloroplast"/>
<sequence>MSLQVPVAKEDNRESNSHLATLSGNLYTRMNLPHEPRARAGIVFFMEKQSNLALHSEFLLHVIIN</sequence>
<keyword id="KW-0150">Chloroplast</keyword>
<keyword id="KW-0934">Plastid</keyword>
<feature type="chain" id="PRO_0000217452" description="Uncharacterized 7.4 kDa protein in ndhF-psbD intergenic region">
    <location>
        <begin position="1"/>
        <end position="65"/>
    </location>
</feature>
<accession>Q9MUM6</accession>
<comment type="subcellular location">
    <subcellularLocation>
        <location>Plastid</location>
        <location>Chloroplast</location>
    </subcellularLocation>
</comment>
<dbReference type="EMBL" id="AF166114">
    <property type="protein sequence ID" value="AAF43893.1"/>
    <property type="molecule type" value="Genomic_DNA"/>
</dbReference>
<dbReference type="RefSeq" id="NP_038434.1">
    <property type="nucleotide sequence ID" value="NC_002186.1"/>
</dbReference>
<dbReference type="GeneID" id="1403690"/>
<dbReference type="GO" id="GO:0009507">
    <property type="term" value="C:chloroplast"/>
    <property type="evidence" value="ECO:0007669"/>
    <property type="project" value="UniProtKB-SubCell"/>
</dbReference>
<organism>
    <name type="scientific">Mesostigma viride</name>
    <name type="common">Green alga</name>
    <dbReference type="NCBI Taxonomy" id="41882"/>
    <lineage>
        <taxon>Eukaryota</taxon>
        <taxon>Viridiplantae</taxon>
        <taxon>Streptophyta</taxon>
        <taxon>Mesostigmatophyceae</taxon>
        <taxon>Mesostigmatales</taxon>
        <taxon>Mesostigmataceae</taxon>
        <taxon>Mesostigma</taxon>
    </lineage>
</organism>
<protein>
    <recommendedName>
        <fullName>Uncharacterized 7.4 kDa protein in ndhF-psbD intergenic region</fullName>
    </recommendedName>
</protein>
<proteinExistence type="predicted"/>
<reference key="1">
    <citation type="journal article" date="2000" name="Nature">
        <title>Ancestral chloroplast genome in Mesostigma viride reveals an early branch of green plant evolution.</title>
        <authorList>
            <person name="Lemieux C."/>
            <person name="Otis C."/>
            <person name="Turmel M."/>
        </authorList>
    </citation>
    <scope>NUCLEOTIDE SEQUENCE [LARGE SCALE GENOMIC DNA]</scope>
    <source>
        <strain>NIES-296 / KY-14 / CCMP 2046</strain>
    </source>
</reference>